<accession>Q21CB6</accession>
<name>IHFB_RHOPB</name>
<gene>
    <name evidence="1" type="primary">ihfB</name>
    <name evidence="1" type="synonym">himD</name>
    <name type="ordered locus">RPC_0395</name>
</gene>
<reference key="1">
    <citation type="submission" date="2006-03" db="EMBL/GenBank/DDBJ databases">
        <title>Complete sequence of Rhodopseudomonas palustris BisB18.</title>
        <authorList>
            <consortium name="US DOE Joint Genome Institute"/>
            <person name="Copeland A."/>
            <person name="Lucas S."/>
            <person name="Lapidus A."/>
            <person name="Barry K."/>
            <person name="Detter J.C."/>
            <person name="Glavina del Rio T."/>
            <person name="Hammon N."/>
            <person name="Israni S."/>
            <person name="Dalin E."/>
            <person name="Tice H."/>
            <person name="Pitluck S."/>
            <person name="Chain P."/>
            <person name="Malfatti S."/>
            <person name="Shin M."/>
            <person name="Vergez L."/>
            <person name="Schmutz J."/>
            <person name="Larimer F."/>
            <person name="Land M."/>
            <person name="Hauser L."/>
            <person name="Pelletier D.A."/>
            <person name="Kyrpides N."/>
            <person name="Anderson I."/>
            <person name="Oda Y."/>
            <person name="Harwood C.S."/>
            <person name="Richardson P."/>
        </authorList>
    </citation>
    <scope>NUCLEOTIDE SEQUENCE [LARGE SCALE GENOMIC DNA]</scope>
    <source>
        <strain>BisB18</strain>
    </source>
</reference>
<organism>
    <name type="scientific">Rhodopseudomonas palustris (strain BisB18)</name>
    <dbReference type="NCBI Taxonomy" id="316056"/>
    <lineage>
        <taxon>Bacteria</taxon>
        <taxon>Pseudomonadati</taxon>
        <taxon>Pseudomonadota</taxon>
        <taxon>Alphaproteobacteria</taxon>
        <taxon>Hyphomicrobiales</taxon>
        <taxon>Nitrobacteraceae</taxon>
        <taxon>Rhodopseudomonas</taxon>
    </lineage>
</organism>
<feature type="chain" id="PRO_1000060645" description="Integration host factor subunit beta">
    <location>
        <begin position="1"/>
        <end position="101"/>
    </location>
</feature>
<feature type="region of interest" description="Disordered" evidence="2">
    <location>
        <begin position="58"/>
        <end position="101"/>
    </location>
</feature>
<feature type="compositionally biased region" description="Basic and acidic residues" evidence="2">
    <location>
        <begin position="82"/>
        <end position="92"/>
    </location>
</feature>
<sequence length="101" mass="11255">MIKSELVQRIAEHNPHLYQRDVENIVNAILDEIVAALARGDRVELRGFGAFSVKHRPARAGRNPRTGAHVPVDQKSVPFFKTGKEMRERLNRDTGAPDSGA</sequence>
<protein>
    <recommendedName>
        <fullName evidence="1">Integration host factor subunit beta</fullName>
        <shortName evidence="1">IHF-beta</shortName>
    </recommendedName>
</protein>
<dbReference type="EMBL" id="CP000301">
    <property type="protein sequence ID" value="ABD85970.1"/>
    <property type="molecule type" value="Genomic_DNA"/>
</dbReference>
<dbReference type="SMR" id="Q21CB6"/>
<dbReference type="STRING" id="316056.RPC_0395"/>
<dbReference type="KEGG" id="rpc:RPC_0395"/>
<dbReference type="eggNOG" id="COG0776">
    <property type="taxonomic scope" value="Bacteria"/>
</dbReference>
<dbReference type="HOGENOM" id="CLU_105066_2_0_5"/>
<dbReference type="OrthoDB" id="9804203at2"/>
<dbReference type="GO" id="GO:0005694">
    <property type="term" value="C:chromosome"/>
    <property type="evidence" value="ECO:0007669"/>
    <property type="project" value="InterPro"/>
</dbReference>
<dbReference type="GO" id="GO:0005829">
    <property type="term" value="C:cytosol"/>
    <property type="evidence" value="ECO:0007669"/>
    <property type="project" value="TreeGrafter"/>
</dbReference>
<dbReference type="GO" id="GO:0003677">
    <property type="term" value="F:DNA binding"/>
    <property type="evidence" value="ECO:0007669"/>
    <property type="project" value="UniProtKB-UniRule"/>
</dbReference>
<dbReference type="GO" id="GO:0030527">
    <property type="term" value="F:structural constituent of chromatin"/>
    <property type="evidence" value="ECO:0007669"/>
    <property type="project" value="InterPro"/>
</dbReference>
<dbReference type="GO" id="GO:0006310">
    <property type="term" value="P:DNA recombination"/>
    <property type="evidence" value="ECO:0007669"/>
    <property type="project" value="UniProtKB-UniRule"/>
</dbReference>
<dbReference type="GO" id="GO:0006355">
    <property type="term" value="P:regulation of DNA-templated transcription"/>
    <property type="evidence" value="ECO:0007669"/>
    <property type="project" value="UniProtKB-UniRule"/>
</dbReference>
<dbReference type="GO" id="GO:0006417">
    <property type="term" value="P:regulation of translation"/>
    <property type="evidence" value="ECO:0007669"/>
    <property type="project" value="UniProtKB-UniRule"/>
</dbReference>
<dbReference type="CDD" id="cd13836">
    <property type="entry name" value="IHF_B"/>
    <property type="match status" value="1"/>
</dbReference>
<dbReference type="FunFam" id="4.10.520.10:FF:000008">
    <property type="entry name" value="Integration host factor subunit beta"/>
    <property type="match status" value="1"/>
</dbReference>
<dbReference type="Gene3D" id="4.10.520.10">
    <property type="entry name" value="IHF-like DNA-binding proteins"/>
    <property type="match status" value="1"/>
</dbReference>
<dbReference type="HAMAP" id="MF_00381">
    <property type="entry name" value="IHF_beta"/>
    <property type="match status" value="1"/>
</dbReference>
<dbReference type="InterPro" id="IPR000119">
    <property type="entry name" value="Hist_DNA-bd"/>
</dbReference>
<dbReference type="InterPro" id="IPR020816">
    <property type="entry name" value="Histone-like_DNA-bd_CS"/>
</dbReference>
<dbReference type="InterPro" id="IPR010992">
    <property type="entry name" value="IHF-like_DNA-bd_dom_sf"/>
</dbReference>
<dbReference type="InterPro" id="IPR005685">
    <property type="entry name" value="IHF_beta"/>
</dbReference>
<dbReference type="NCBIfam" id="TIGR00988">
    <property type="entry name" value="hip"/>
    <property type="match status" value="1"/>
</dbReference>
<dbReference type="NCBIfam" id="NF001222">
    <property type="entry name" value="PRK00199.1"/>
    <property type="match status" value="1"/>
</dbReference>
<dbReference type="PANTHER" id="PTHR33175">
    <property type="entry name" value="DNA-BINDING PROTEIN HU"/>
    <property type="match status" value="1"/>
</dbReference>
<dbReference type="PANTHER" id="PTHR33175:SF5">
    <property type="entry name" value="INTEGRATION HOST FACTOR SUBUNIT BETA"/>
    <property type="match status" value="1"/>
</dbReference>
<dbReference type="Pfam" id="PF00216">
    <property type="entry name" value="Bac_DNA_binding"/>
    <property type="match status" value="1"/>
</dbReference>
<dbReference type="PRINTS" id="PR01727">
    <property type="entry name" value="DNABINDINGHU"/>
</dbReference>
<dbReference type="SMART" id="SM00411">
    <property type="entry name" value="BHL"/>
    <property type="match status" value="1"/>
</dbReference>
<dbReference type="SUPFAM" id="SSF47729">
    <property type="entry name" value="IHF-like DNA-binding proteins"/>
    <property type="match status" value="1"/>
</dbReference>
<dbReference type="PROSITE" id="PS00045">
    <property type="entry name" value="HISTONE_LIKE"/>
    <property type="match status" value="1"/>
</dbReference>
<evidence type="ECO:0000255" key="1">
    <source>
        <dbReference type="HAMAP-Rule" id="MF_00381"/>
    </source>
</evidence>
<evidence type="ECO:0000256" key="2">
    <source>
        <dbReference type="SAM" id="MobiDB-lite"/>
    </source>
</evidence>
<proteinExistence type="inferred from homology"/>
<comment type="function">
    <text evidence="1">This protein is one of the two subunits of integration host factor, a specific DNA-binding protein that functions in genetic recombination as well as in transcriptional and translational control.</text>
</comment>
<comment type="subunit">
    <text evidence="1">Heterodimer of an alpha and a beta chain.</text>
</comment>
<comment type="similarity">
    <text evidence="1">Belongs to the bacterial histone-like protein family.</text>
</comment>
<keyword id="KW-0233">DNA recombination</keyword>
<keyword id="KW-0238">DNA-binding</keyword>
<keyword id="KW-0804">Transcription</keyword>
<keyword id="KW-0805">Transcription regulation</keyword>
<keyword id="KW-0810">Translation regulation</keyword>